<organism>
    <name type="scientific">Bacteroides fragilis (strain ATCC 25285 / DSM 2151 / CCUG 4856 / JCM 11019 / LMG 10263 / NCTC 9343 / Onslow / VPI 2553 / EN-2)</name>
    <dbReference type="NCBI Taxonomy" id="272559"/>
    <lineage>
        <taxon>Bacteria</taxon>
        <taxon>Pseudomonadati</taxon>
        <taxon>Bacteroidota</taxon>
        <taxon>Bacteroidia</taxon>
        <taxon>Bacteroidales</taxon>
        <taxon>Bacteroidaceae</taxon>
        <taxon>Bacteroides</taxon>
    </lineage>
</organism>
<sequence>MAKEVAGLIKLQIKGGAANPSPPVGPALGSKGINIMEFCKQFNARTQDKAGKILPVIITYYADKSFDFVIKTPPVAIQLLEVAKVKSGSAEPNRKKVAEITWEQVRTIAQDKMVDLNCFTVEAAMRMVAGTARSMGIAVKGEFPVNN</sequence>
<evidence type="ECO:0000255" key="1">
    <source>
        <dbReference type="HAMAP-Rule" id="MF_00736"/>
    </source>
</evidence>
<evidence type="ECO:0000305" key="2"/>
<keyword id="KW-0488">Methylation</keyword>
<keyword id="KW-0687">Ribonucleoprotein</keyword>
<keyword id="KW-0689">Ribosomal protein</keyword>
<keyword id="KW-0694">RNA-binding</keyword>
<keyword id="KW-0699">rRNA-binding</keyword>
<comment type="function">
    <text evidence="1">Forms part of the ribosomal stalk which helps the ribosome interact with GTP-bound translation factors.</text>
</comment>
<comment type="subunit">
    <text evidence="1">Part of the ribosomal stalk of the 50S ribosomal subunit. Interacts with L10 and the large rRNA to form the base of the stalk. L10 forms an elongated spine to which L12 dimers bind in a sequential fashion forming a multimeric L10(L12)X complex.</text>
</comment>
<comment type="PTM">
    <text evidence="1">One or more lysine residues are methylated.</text>
</comment>
<comment type="similarity">
    <text evidence="1">Belongs to the universal ribosomal protein uL11 family.</text>
</comment>
<gene>
    <name evidence="1" type="primary">rplK</name>
    <name type="ordered locus">BF4019</name>
</gene>
<dbReference type="EMBL" id="CR626927">
    <property type="protein sequence ID" value="CAH09695.1"/>
    <property type="molecule type" value="Genomic_DNA"/>
</dbReference>
<dbReference type="RefSeq" id="WP_005791514.1">
    <property type="nucleotide sequence ID" value="NZ_UFTH01000001.1"/>
</dbReference>
<dbReference type="SMR" id="Q5L893"/>
<dbReference type="PaxDb" id="272559-BF9343_3914"/>
<dbReference type="GeneID" id="60368251"/>
<dbReference type="KEGG" id="bfs:BF9343_3914"/>
<dbReference type="eggNOG" id="COG0080">
    <property type="taxonomic scope" value="Bacteria"/>
</dbReference>
<dbReference type="HOGENOM" id="CLU_074237_2_1_10"/>
<dbReference type="Proteomes" id="UP000006731">
    <property type="component" value="Chromosome"/>
</dbReference>
<dbReference type="GO" id="GO:0022625">
    <property type="term" value="C:cytosolic large ribosomal subunit"/>
    <property type="evidence" value="ECO:0007669"/>
    <property type="project" value="TreeGrafter"/>
</dbReference>
<dbReference type="GO" id="GO:0070180">
    <property type="term" value="F:large ribosomal subunit rRNA binding"/>
    <property type="evidence" value="ECO:0007669"/>
    <property type="project" value="UniProtKB-UniRule"/>
</dbReference>
<dbReference type="GO" id="GO:0003735">
    <property type="term" value="F:structural constituent of ribosome"/>
    <property type="evidence" value="ECO:0007669"/>
    <property type="project" value="InterPro"/>
</dbReference>
<dbReference type="GO" id="GO:0006412">
    <property type="term" value="P:translation"/>
    <property type="evidence" value="ECO:0007669"/>
    <property type="project" value="UniProtKB-UniRule"/>
</dbReference>
<dbReference type="CDD" id="cd00349">
    <property type="entry name" value="Ribosomal_L11"/>
    <property type="match status" value="1"/>
</dbReference>
<dbReference type="FunFam" id="1.10.10.250:FF:000001">
    <property type="entry name" value="50S ribosomal protein L11"/>
    <property type="match status" value="1"/>
</dbReference>
<dbReference type="FunFam" id="3.30.1550.10:FF:000001">
    <property type="entry name" value="50S ribosomal protein L11"/>
    <property type="match status" value="1"/>
</dbReference>
<dbReference type="Gene3D" id="1.10.10.250">
    <property type="entry name" value="Ribosomal protein L11, C-terminal domain"/>
    <property type="match status" value="1"/>
</dbReference>
<dbReference type="Gene3D" id="3.30.1550.10">
    <property type="entry name" value="Ribosomal protein L11/L12, N-terminal domain"/>
    <property type="match status" value="1"/>
</dbReference>
<dbReference type="HAMAP" id="MF_00736">
    <property type="entry name" value="Ribosomal_uL11"/>
    <property type="match status" value="1"/>
</dbReference>
<dbReference type="InterPro" id="IPR000911">
    <property type="entry name" value="Ribosomal_uL11"/>
</dbReference>
<dbReference type="InterPro" id="IPR006519">
    <property type="entry name" value="Ribosomal_uL11_bac-typ"/>
</dbReference>
<dbReference type="InterPro" id="IPR020783">
    <property type="entry name" value="Ribosomal_uL11_C"/>
</dbReference>
<dbReference type="InterPro" id="IPR036769">
    <property type="entry name" value="Ribosomal_uL11_C_sf"/>
</dbReference>
<dbReference type="InterPro" id="IPR020785">
    <property type="entry name" value="Ribosomal_uL11_CS"/>
</dbReference>
<dbReference type="InterPro" id="IPR020784">
    <property type="entry name" value="Ribosomal_uL11_N"/>
</dbReference>
<dbReference type="InterPro" id="IPR036796">
    <property type="entry name" value="Ribosomal_uL11_N_sf"/>
</dbReference>
<dbReference type="NCBIfam" id="TIGR01632">
    <property type="entry name" value="L11_bact"/>
    <property type="match status" value="1"/>
</dbReference>
<dbReference type="PANTHER" id="PTHR11661">
    <property type="entry name" value="60S RIBOSOMAL PROTEIN L12"/>
    <property type="match status" value="1"/>
</dbReference>
<dbReference type="PANTHER" id="PTHR11661:SF1">
    <property type="entry name" value="LARGE RIBOSOMAL SUBUNIT PROTEIN UL11M"/>
    <property type="match status" value="1"/>
</dbReference>
<dbReference type="Pfam" id="PF00298">
    <property type="entry name" value="Ribosomal_L11"/>
    <property type="match status" value="1"/>
</dbReference>
<dbReference type="Pfam" id="PF03946">
    <property type="entry name" value="Ribosomal_L11_N"/>
    <property type="match status" value="1"/>
</dbReference>
<dbReference type="SMART" id="SM00649">
    <property type="entry name" value="RL11"/>
    <property type="match status" value="1"/>
</dbReference>
<dbReference type="SUPFAM" id="SSF54747">
    <property type="entry name" value="Ribosomal L11/L12e N-terminal domain"/>
    <property type="match status" value="1"/>
</dbReference>
<dbReference type="SUPFAM" id="SSF46906">
    <property type="entry name" value="Ribosomal protein L11, C-terminal domain"/>
    <property type="match status" value="1"/>
</dbReference>
<dbReference type="PROSITE" id="PS00359">
    <property type="entry name" value="RIBOSOMAL_L11"/>
    <property type="match status" value="1"/>
</dbReference>
<proteinExistence type="inferred from homology"/>
<protein>
    <recommendedName>
        <fullName evidence="1">Large ribosomal subunit protein uL11</fullName>
    </recommendedName>
    <alternativeName>
        <fullName evidence="2">50S ribosomal protein L11</fullName>
    </alternativeName>
</protein>
<reference key="1">
    <citation type="journal article" date="2005" name="Science">
        <title>Extensive DNA inversions in the B. fragilis genome control variable gene expression.</title>
        <authorList>
            <person name="Cerdeno-Tarraga A.-M."/>
            <person name="Patrick S."/>
            <person name="Crossman L.C."/>
            <person name="Blakely G."/>
            <person name="Abratt V."/>
            <person name="Lennard N."/>
            <person name="Poxton I."/>
            <person name="Duerden B."/>
            <person name="Harris B."/>
            <person name="Quail M.A."/>
            <person name="Barron A."/>
            <person name="Clark L."/>
            <person name="Corton C."/>
            <person name="Doggett J."/>
            <person name="Holden M.T.G."/>
            <person name="Larke N."/>
            <person name="Line A."/>
            <person name="Lord A."/>
            <person name="Norbertczak H."/>
            <person name="Ormond D."/>
            <person name="Price C."/>
            <person name="Rabbinowitsch E."/>
            <person name="Woodward J."/>
            <person name="Barrell B.G."/>
            <person name="Parkhill J."/>
        </authorList>
    </citation>
    <scope>NUCLEOTIDE SEQUENCE [LARGE SCALE GENOMIC DNA]</scope>
    <source>
        <strain>ATCC 25285 / DSM 2151 / CCUG 4856 / JCM 11019 / LMG 10263 / NCTC 9343 / Onslow / VPI 2553 / EN-2</strain>
    </source>
</reference>
<accession>Q5L893</accession>
<name>RL11_BACFN</name>
<feature type="chain" id="PRO_0000258122" description="Large ribosomal subunit protein uL11">
    <location>
        <begin position="1"/>
        <end position="147"/>
    </location>
</feature>